<proteinExistence type="inferred from homology"/>
<keyword id="KW-0227">DNA damage</keyword>
<keyword id="KW-0234">DNA repair</keyword>
<name>MUTL_BORPA</name>
<organism>
    <name type="scientific">Bordetella parapertussis (strain 12822 / ATCC BAA-587 / NCTC 13253)</name>
    <dbReference type="NCBI Taxonomy" id="257311"/>
    <lineage>
        <taxon>Bacteria</taxon>
        <taxon>Pseudomonadati</taxon>
        <taxon>Pseudomonadota</taxon>
        <taxon>Betaproteobacteria</taxon>
        <taxon>Burkholderiales</taxon>
        <taxon>Alcaligenaceae</taxon>
        <taxon>Bordetella</taxon>
    </lineage>
</organism>
<protein>
    <recommendedName>
        <fullName evidence="1">DNA mismatch repair protein MutL</fullName>
    </recommendedName>
</protein>
<accession>Q7W4N5</accession>
<evidence type="ECO:0000255" key="1">
    <source>
        <dbReference type="HAMAP-Rule" id="MF_00149"/>
    </source>
</evidence>
<evidence type="ECO:0000256" key="2">
    <source>
        <dbReference type="SAM" id="MobiDB-lite"/>
    </source>
</evidence>
<dbReference type="EMBL" id="BX640434">
    <property type="protein sequence ID" value="CAE38907.1"/>
    <property type="molecule type" value="Genomic_DNA"/>
</dbReference>
<dbReference type="RefSeq" id="WP_010929160.1">
    <property type="nucleotide sequence ID" value="NC_002928.3"/>
</dbReference>
<dbReference type="SMR" id="Q7W4N5"/>
<dbReference type="GeneID" id="93205411"/>
<dbReference type="KEGG" id="bpa:BPP3623"/>
<dbReference type="HOGENOM" id="CLU_004131_4_2_4"/>
<dbReference type="Proteomes" id="UP000001421">
    <property type="component" value="Chromosome"/>
</dbReference>
<dbReference type="GO" id="GO:0032300">
    <property type="term" value="C:mismatch repair complex"/>
    <property type="evidence" value="ECO:0007669"/>
    <property type="project" value="InterPro"/>
</dbReference>
<dbReference type="GO" id="GO:0005524">
    <property type="term" value="F:ATP binding"/>
    <property type="evidence" value="ECO:0007669"/>
    <property type="project" value="InterPro"/>
</dbReference>
<dbReference type="GO" id="GO:0016887">
    <property type="term" value="F:ATP hydrolysis activity"/>
    <property type="evidence" value="ECO:0007669"/>
    <property type="project" value="InterPro"/>
</dbReference>
<dbReference type="GO" id="GO:0140664">
    <property type="term" value="F:ATP-dependent DNA damage sensor activity"/>
    <property type="evidence" value="ECO:0007669"/>
    <property type="project" value="InterPro"/>
</dbReference>
<dbReference type="GO" id="GO:0030983">
    <property type="term" value="F:mismatched DNA binding"/>
    <property type="evidence" value="ECO:0007669"/>
    <property type="project" value="InterPro"/>
</dbReference>
<dbReference type="GO" id="GO:0006298">
    <property type="term" value="P:mismatch repair"/>
    <property type="evidence" value="ECO:0007669"/>
    <property type="project" value="UniProtKB-UniRule"/>
</dbReference>
<dbReference type="CDD" id="cd16926">
    <property type="entry name" value="HATPase_MutL-MLH-PMS-like"/>
    <property type="match status" value="1"/>
</dbReference>
<dbReference type="CDD" id="cd03482">
    <property type="entry name" value="MutL_Trans_MutL"/>
    <property type="match status" value="1"/>
</dbReference>
<dbReference type="FunFam" id="3.30.565.10:FF:000003">
    <property type="entry name" value="DNA mismatch repair endonuclease MutL"/>
    <property type="match status" value="1"/>
</dbReference>
<dbReference type="Gene3D" id="3.30.230.10">
    <property type="match status" value="1"/>
</dbReference>
<dbReference type="Gene3D" id="3.30.565.10">
    <property type="entry name" value="Histidine kinase-like ATPase, C-terminal domain"/>
    <property type="match status" value="1"/>
</dbReference>
<dbReference type="Gene3D" id="3.30.1540.20">
    <property type="entry name" value="MutL, C-terminal domain, dimerisation subdomain"/>
    <property type="match status" value="1"/>
</dbReference>
<dbReference type="Gene3D" id="3.30.1370.100">
    <property type="entry name" value="MutL, C-terminal domain, regulatory subdomain"/>
    <property type="match status" value="1"/>
</dbReference>
<dbReference type="HAMAP" id="MF_00149">
    <property type="entry name" value="DNA_mis_repair"/>
    <property type="match status" value="1"/>
</dbReference>
<dbReference type="InterPro" id="IPR014762">
    <property type="entry name" value="DNA_mismatch_repair_CS"/>
</dbReference>
<dbReference type="InterPro" id="IPR020667">
    <property type="entry name" value="DNA_mismatch_repair_MutL"/>
</dbReference>
<dbReference type="InterPro" id="IPR013507">
    <property type="entry name" value="DNA_mismatch_S5_2-like"/>
</dbReference>
<dbReference type="InterPro" id="IPR036890">
    <property type="entry name" value="HATPase_C_sf"/>
</dbReference>
<dbReference type="InterPro" id="IPR002099">
    <property type="entry name" value="MutL/Mlh/PMS"/>
</dbReference>
<dbReference type="InterPro" id="IPR038973">
    <property type="entry name" value="MutL/Mlh/Pms-like"/>
</dbReference>
<dbReference type="InterPro" id="IPR014790">
    <property type="entry name" value="MutL_C"/>
</dbReference>
<dbReference type="InterPro" id="IPR042120">
    <property type="entry name" value="MutL_C_dimsub"/>
</dbReference>
<dbReference type="InterPro" id="IPR042121">
    <property type="entry name" value="MutL_C_regsub"/>
</dbReference>
<dbReference type="InterPro" id="IPR037198">
    <property type="entry name" value="MutL_C_sf"/>
</dbReference>
<dbReference type="InterPro" id="IPR020568">
    <property type="entry name" value="Ribosomal_Su5_D2-typ_SF"/>
</dbReference>
<dbReference type="InterPro" id="IPR014721">
    <property type="entry name" value="Ribsml_uS5_D2-typ_fold_subgr"/>
</dbReference>
<dbReference type="NCBIfam" id="TIGR00585">
    <property type="entry name" value="mutl"/>
    <property type="match status" value="1"/>
</dbReference>
<dbReference type="NCBIfam" id="NF000949">
    <property type="entry name" value="PRK00095.1-2"/>
    <property type="match status" value="1"/>
</dbReference>
<dbReference type="PANTHER" id="PTHR10073">
    <property type="entry name" value="DNA MISMATCH REPAIR PROTEIN MLH, PMS, MUTL"/>
    <property type="match status" value="1"/>
</dbReference>
<dbReference type="PANTHER" id="PTHR10073:SF12">
    <property type="entry name" value="DNA MISMATCH REPAIR PROTEIN MLH1"/>
    <property type="match status" value="1"/>
</dbReference>
<dbReference type="Pfam" id="PF01119">
    <property type="entry name" value="DNA_mis_repair"/>
    <property type="match status" value="1"/>
</dbReference>
<dbReference type="Pfam" id="PF13589">
    <property type="entry name" value="HATPase_c_3"/>
    <property type="match status" value="1"/>
</dbReference>
<dbReference type="Pfam" id="PF08676">
    <property type="entry name" value="MutL_C"/>
    <property type="match status" value="1"/>
</dbReference>
<dbReference type="SMART" id="SM01340">
    <property type="entry name" value="DNA_mis_repair"/>
    <property type="match status" value="1"/>
</dbReference>
<dbReference type="SMART" id="SM00853">
    <property type="entry name" value="MutL_C"/>
    <property type="match status" value="1"/>
</dbReference>
<dbReference type="SUPFAM" id="SSF55874">
    <property type="entry name" value="ATPase domain of HSP90 chaperone/DNA topoisomerase II/histidine kinase"/>
    <property type="match status" value="1"/>
</dbReference>
<dbReference type="SUPFAM" id="SSF118116">
    <property type="entry name" value="DNA mismatch repair protein MutL"/>
    <property type="match status" value="1"/>
</dbReference>
<dbReference type="SUPFAM" id="SSF54211">
    <property type="entry name" value="Ribosomal protein S5 domain 2-like"/>
    <property type="match status" value="1"/>
</dbReference>
<dbReference type="PROSITE" id="PS00058">
    <property type="entry name" value="DNA_MISMATCH_REPAIR_1"/>
    <property type="match status" value="1"/>
</dbReference>
<sequence>MSDRRPIATLPDLLISQIAAGEVIERPASVLKEILENAIDAGARAIEVRLEGGGIRRIAVTDDGSGIPPEELPLALTRHATSKIRSLDELESVASMGFRGEALASIASVADLTIISRTRGAEHAWQIDGGSLQVSPASGPPGTTIDVRQLFDRVPARRKFLRSEATEFGHCVDAMERIALAHPEVAFRLFHHDRAQRQWLPADHGQRIRDVLGAEFVDHVLPVQAAAGAIALMGMVTRPTAARARADRQYLYVNGRFVRDRTVSHALRSAYADVLHGDRQPAYVLYLDIDPGAVDVNVHPAKHEVRFRDSGAVHRFVSQVVGQTLAQTGGAEAVPAGVPDGAAPDAAYAGEPAAAAPGLAEPRAPYPAAYPSPGQSPYQGSPARPHTQVPFRLHGEPAGIPATDWQSLYRPLPGDAAPAATALRAAPATPLPTADEHPLGQALAQLHGIYILAQNSRGLVLVDMHAAHERVVYEQLKRALDDRALPRQDLLVPVVFHAAEKDVALVEEHETQLNELGFEMRPSGPASIAVRSVPALLARGDIESLARAVLRDLGAVGVSRLLTEQRNELLSTMACHGSVRANRRLTLEEMNALLRQMEITERADQCNHGRPTWVQWSVNDLDKLFLRGQ</sequence>
<feature type="chain" id="PRO_1000009992" description="DNA mismatch repair protein MutL">
    <location>
        <begin position="1"/>
        <end position="629"/>
    </location>
</feature>
<feature type="region of interest" description="Disordered" evidence="2">
    <location>
        <begin position="364"/>
        <end position="388"/>
    </location>
</feature>
<feature type="compositionally biased region" description="Low complexity" evidence="2">
    <location>
        <begin position="371"/>
        <end position="382"/>
    </location>
</feature>
<comment type="function">
    <text evidence="1">This protein is involved in the repair of mismatches in DNA. It is required for dam-dependent methyl-directed DNA mismatch repair. May act as a 'molecular matchmaker', a protein that promotes the formation of a stable complex between two or more DNA-binding proteins in an ATP-dependent manner without itself being part of a final effector complex.</text>
</comment>
<comment type="similarity">
    <text evidence="1">Belongs to the DNA mismatch repair MutL/HexB family.</text>
</comment>
<reference key="1">
    <citation type="journal article" date="2003" name="Nat. Genet.">
        <title>Comparative analysis of the genome sequences of Bordetella pertussis, Bordetella parapertussis and Bordetella bronchiseptica.</title>
        <authorList>
            <person name="Parkhill J."/>
            <person name="Sebaihia M."/>
            <person name="Preston A."/>
            <person name="Murphy L.D."/>
            <person name="Thomson N.R."/>
            <person name="Harris D.E."/>
            <person name="Holden M.T.G."/>
            <person name="Churcher C.M."/>
            <person name="Bentley S.D."/>
            <person name="Mungall K.L."/>
            <person name="Cerdeno-Tarraga A.-M."/>
            <person name="Temple L."/>
            <person name="James K.D."/>
            <person name="Harris B."/>
            <person name="Quail M.A."/>
            <person name="Achtman M."/>
            <person name="Atkin R."/>
            <person name="Baker S."/>
            <person name="Basham D."/>
            <person name="Bason N."/>
            <person name="Cherevach I."/>
            <person name="Chillingworth T."/>
            <person name="Collins M."/>
            <person name="Cronin A."/>
            <person name="Davis P."/>
            <person name="Doggett J."/>
            <person name="Feltwell T."/>
            <person name="Goble A."/>
            <person name="Hamlin N."/>
            <person name="Hauser H."/>
            <person name="Holroyd S."/>
            <person name="Jagels K."/>
            <person name="Leather S."/>
            <person name="Moule S."/>
            <person name="Norberczak H."/>
            <person name="O'Neil S."/>
            <person name="Ormond D."/>
            <person name="Price C."/>
            <person name="Rabbinowitsch E."/>
            <person name="Rutter S."/>
            <person name="Sanders M."/>
            <person name="Saunders D."/>
            <person name="Seeger K."/>
            <person name="Sharp S."/>
            <person name="Simmonds M."/>
            <person name="Skelton J."/>
            <person name="Squares R."/>
            <person name="Squares S."/>
            <person name="Stevens K."/>
            <person name="Unwin L."/>
            <person name="Whitehead S."/>
            <person name="Barrell B.G."/>
            <person name="Maskell D.J."/>
        </authorList>
    </citation>
    <scope>NUCLEOTIDE SEQUENCE [LARGE SCALE GENOMIC DNA]</scope>
    <source>
        <strain>12822 / ATCC BAA-587 / NCTC 13253</strain>
    </source>
</reference>
<gene>
    <name evidence="1" type="primary">mutL</name>
    <name type="ordered locus">BPP3623</name>
</gene>